<organism evidence="14">
    <name type="scientific">Arabidopsis thaliana</name>
    <name type="common">Mouse-ear cress</name>
    <dbReference type="NCBI Taxonomy" id="3702"/>
    <lineage>
        <taxon>Eukaryota</taxon>
        <taxon>Viridiplantae</taxon>
        <taxon>Streptophyta</taxon>
        <taxon>Embryophyta</taxon>
        <taxon>Tracheophyta</taxon>
        <taxon>Spermatophyta</taxon>
        <taxon>Magnoliopsida</taxon>
        <taxon>eudicotyledons</taxon>
        <taxon>Gunneridae</taxon>
        <taxon>Pentapetalae</taxon>
        <taxon>rosids</taxon>
        <taxon>malvids</taxon>
        <taxon>Brassicales</taxon>
        <taxon>Brassicaceae</taxon>
        <taxon>Camelineae</taxon>
        <taxon>Arabidopsis</taxon>
    </lineage>
</organism>
<sequence>MEAPTPLLLLVLLTTITFFTTSVADDQTAMLALAKSFNPPPSDWSSTTDFCKWSGVRCTGGRVTTISLADKSLTGFIAPEISTLSELKSVSIQRNKLSGTIPSFAKLSSLQEIYMDENNFVGVETGAFAGLTSLQILSLSDNNNITTWSFPSELVDSTSLTTIYLDNTNIAGVLPDIFDSLASLQNLRLSYNNITGVLPPSLGKSSIQNLWINNQDLGMSGTIEVLSSMTSLSQAWLHKNHFFGPIPDLSKSENLFDLQLRDNDLTGIVPPTLLTLASLKNISLDNNKFQGPLPLFSPEVKVTIDHNVFCTTKAGQSCSPQVMTLLAVAGGLGYPSMLAESWQGDDACSGWAYVSCDSAGKNVVTLNLGKHGFTGFISPAIANLTSLKSLYLNGNDLTGVIPKELTFMTSLQLIDVSNNNLRGEIPKFPATVKFSYKPGNALLGTNGGDGSSPGTGGASGGPGGSSGGGGSKVGVIVGVIVAVLVFLAILGFVVYKFVMKRKYGRFNRTDPEKVGKILVSDAVSNGGSGNGGYANGHGANNFNALNSPSSGDNSDRFLLEGGSVTIPMEVLRQVTNNFSEDNILGRGGFGVVYAGELHDGTKTAVKRMECAAMGNKGMSEFQAEIAVLTKVRHRHLVALLGYCVNGNERLLVYEYMPQGNLGQHLFEWSELGYSPLTWKQRVSIALDVARGVEYLHSLAQQSFIHRDLKPSNILLGDDMRAKVADFGLVKNAPDGKYSVETRLAGTFGYLAPEYAATGRVTTKVDVYAFGVVLMEILTGRKALDDSLPDERSHLVTWFRRILINKENIPKALDQTLEADEETMESIYRVAELAGHCTAREPQQRPDMGHAVNVLGPLVEKWKPSCQEEEESFGIDVNMSLPQALQRWQNEGTSSSTMFHGDFSYSQTQSSIPPKASGFPNTFDSADGR</sequence>
<keyword id="KW-0067">ATP-binding</keyword>
<keyword id="KW-1015">Disulfide bond</keyword>
<keyword id="KW-0325">Glycoprotein</keyword>
<keyword id="KW-0418">Kinase</keyword>
<keyword id="KW-0433">Leucine-rich repeat</keyword>
<keyword id="KW-0472">Membrane</keyword>
<keyword id="KW-0547">Nucleotide-binding</keyword>
<keyword id="KW-0675">Receptor</keyword>
<keyword id="KW-1185">Reference proteome</keyword>
<keyword id="KW-0677">Repeat</keyword>
<keyword id="KW-0723">Serine/threonine-protein kinase</keyword>
<keyword id="KW-0732">Signal</keyword>
<keyword id="KW-0808">Transferase</keyword>
<keyword id="KW-0812">Transmembrane</keyword>
<keyword id="KW-1133">Transmembrane helix</keyword>
<feature type="signal peptide" evidence="2">
    <location>
        <begin position="1"/>
        <end position="24"/>
    </location>
</feature>
<feature type="chain" id="PRO_0000433432" description="Receptor-like kinase TMK4" evidence="2">
    <location>
        <begin position="25"/>
        <end position="928"/>
    </location>
</feature>
<feature type="topological domain" description="Extracellular" evidence="11">
    <location>
        <begin position="25"/>
        <end position="472"/>
    </location>
</feature>
<feature type="transmembrane region" description="Helical" evidence="2">
    <location>
        <begin position="473"/>
        <end position="493"/>
    </location>
</feature>
<feature type="topological domain" description="Cytoplasmic" evidence="11">
    <location>
        <begin position="494"/>
        <end position="928"/>
    </location>
</feature>
<feature type="repeat" description="LRR 1" evidence="11">
    <location>
        <begin position="61"/>
        <end position="84"/>
    </location>
</feature>
<feature type="repeat" description="LRR 2" evidence="11">
    <location>
        <begin position="85"/>
        <end position="107"/>
    </location>
</feature>
<feature type="repeat" description="LRR 3" evidence="11">
    <location>
        <begin position="108"/>
        <end position="130"/>
    </location>
</feature>
<feature type="repeat" description="LRR 4" evidence="11">
    <location>
        <begin position="132"/>
        <end position="157"/>
    </location>
</feature>
<feature type="repeat" description="LRR 5" evidence="11">
    <location>
        <begin position="158"/>
        <end position="180"/>
    </location>
</feature>
<feature type="repeat" description="LRR 6" evidence="11">
    <location>
        <begin position="181"/>
        <end position="205"/>
    </location>
</feature>
<feature type="repeat" description="LRR 7" evidence="11">
    <location>
        <begin position="207"/>
        <end position="229"/>
    </location>
</feature>
<feature type="repeat" description="LRR 8" evidence="11">
    <location>
        <begin position="230"/>
        <end position="251"/>
    </location>
</feature>
<feature type="repeat" description="LRR 9" evidence="11">
    <location>
        <begin position="252"/>
        <end position="276"/>
    </location>
</feature>
<feature type="repeat" description="LRR 10" evidence="11">
    <location>
        <begin position="278"/>
        <end position="298"/>
    </location>
</feature>
<feature type="repeat" description="LRR 11" evidence="11">
    <location>
        <begin position="360"/>
        <end position="383"/>
    </location>
</feature>
<feature type="repeat" description="LRR 12" evidence="11">
    <location>
        <begin position="384"/>
        <end position="407"/>
    </location>
</feature>
<feature type="repeat" description="LRR 13" evidence="11">
    <location>
        <begin position="408"/>
        <end position="435"/>
    </location>
</feature>
<feature type="domain" description="Protein kinase" evidence="3">
    <location>
        <begin position="578"/>
        <end position="858"/>
    </location>
</feature>
<feature type="region of interest" description="Disordered" evidence="5">
    <location>
        <begin position="445"/>
        <end position="465"/>
    </location>
</feature>
<feature type="region of interest" description="Disordered" evidence="5">
    <location>
        <begin position="898"/>
        <end position="928"/>
    </location>
</feature>
<feature type="compositionally biased region" description="Polar residues" evidence="5">
    <location>
        <begin position="898"/>
        <end position="911"/>
    </location>
</feature>
<feature type="compositionally biased region" description="Polar residues" evidence="5">
    <location>
        <begin position="918"/>
        <end position="928"/>
    </location>
</feature>
<feature type="active site" description="Proton acceptor" evidence="3">
    <location>
        <position position="707"/>
    </location>
</feature>
<feature type="binding site" evidence="3">
    <location>
        <begin position="584"/>
        <end position="592"/>
    </location>
    <ligand>
        <name>ATP</name>
        <dbReference type="ChEBI" id="CHEBI:30616"/>
    </ligand>
</feature>
<feature type="binding site" evidence="3">
    <location>
        <position position="606"/>
    </location>
    <ligand>
        <name>ATP</name>
        <dbReference type="ChEBI" id="CHEBI:30616"/>
    </ligand>
</feature>
<feature type="glycosylation site" description="N-linked (GlcNAc...) asparagine" evidence="4">
    <location>
        <position position="144"/>
    </location>
</feature>
<feature type="glycosylation site" description="N-linked (GlcNAc...) asparagine" evidence="4">
    <location>
        <position position="193"/>
    </location>
</feature>
<feature type="glycosylation site" description="N-linked (GlcNAc...) asparagine" evidence="4">
    <location>
        <position position="281"/>
    </location>
</feature>
<feature type="glycosylation site" description="N-linked (GlcNAc...) asparagine" evidence="4">
    <location>
        <position position="383"/>
    </location>
</feature>
<feature type="disulfide bond" evidence="1">
    <location>
        <begin position="51"/>
        <end position="58"/>
    </location>
</feature>
<feature type="disulfide bond" evidence="1">
    <location>
        <begin position="310"/>
        <end position="318"/>
    </location>
</feature>
<feature type="disulfide bond" evidence="1">
    <location>
        <begin position="348"/>
        <end position="356"/>
    </location>
</feature>
<feature type="sequence conflict" description="In Ref. 1; ACN59321." evidence="11" ref="1">
    <original>R</original>
    <variation>G</variation>
    <location>
        <position position="607"/>
    </location>
</feature>
<name>TMK4_ARATH</name>
<protein>
    <recommendedName>
        <fullName evidence="9">Receptor-like kinase TMK4</fullName>
        <ecNumber evidence="11">2.7.11.1</ecNumber>
    </recommendedName>
    <alternativeName>
        <fullName evidence="10">BAK1-associating receptor-like kinase 1</fullName>
    </alternativeName>
    <alternativeName>
        <fullName evidence="9">Leucine-rich repeat receptor-like kinases TMK4</fullName>
    </alternativeName>
    <alternativeName>
        <fullName evidence="9">Transmembrane kinase 4</fullName>
    </alternativeName>
</protein>
<dbReference type="EC" id="2.7.11.1" evidence="11"/>
<dbReference type="EMBL" id="FJ708726">
    <property type="protein sequence ID" value="ACN59321.1"/>
    <property type="molecule type" value="mRNA"/>
</dbReference>
<dbReference type="EMBL" id="AP000377">
    <property type="protein sequence ID" value="BAB01851.1"/>
    <property type="molecule type" value="Genomic_DNA"/>
</dbReference>
<dbReference type="EMBL" id="CP002686">
    <property type="protein sequence ID" value="AEE76809.1"/>
    <property type="molecule type" value="Genomic_DNA"/>
</dbReference>
<dbReference type="RefSeq" id="NP_189017.1">
    <property type="nucleotide sequence ID" value="NM_113279.3"/>
</dbReference>
<dbReference type="SMR" id="Q9LK43"/>
<dbReference type="FunCoup" id="Q9LK43">
    <property type="interactions" value="909"/>
</dbReference>
<dbReference type="IntAct" id="Q9LK43">
    <property type="interactions" value="18"/>
</dbReference>
<dbReference type="STRING" id="3702.Q9LK43"/>
<dbReference type="GlyCosmos" id="Q9LK43">
    <property type="glycosylation" value="4 sites, No reported glycans"/>
</dbReference>
<dbReference type="GlyGen" id="Q9LK43">
    <property type="glycosylation" value="4 sites"/>
</dbReference>
<dbReference type="iPTMnet" id="Q9LK43"/>
<dbReference type="PaxDb" id="3702-AT3G23750.1"/>
<dbReference type="ProteomicsDB" id="228453"/>
<dbReference type="EnsemblPlants" id="AT3G23750.1">
    <property type="protein sequence ID" value="AT3G23750.1"/>
    <property type="gene ID" value="AT3G23750"/>
</dbReference>
<dbReference type="GeneID" id="821957"/>
<dbReference type="Gramene" id="AT3G23750.1">
    <property type="protein sequence ID" value="AT3G23750.1"/>
    <property type="gene ID" value="AT3G23750"/>
</dbReference>
<dbReference type="KEGG" id="ath:AT3G23750"/>
<dbReference type="Araport" id="AT3G23750"/>
<dbReference type="TAIR" id="AT3G23750">
    <property type="gene designation" value="BARK1"/>
</dbReference>
<dbReference type="eggNOG" id="ENOG502QPZR">
    <property type="taxonomic scope" value="Eukaryota"/>
</dbReference>
<dbReference type="HOGENOM" id="CLU_000288_114_6_1"/>
<dbReference type="InParanoid" id="Q9LK43"/>
<dbReference type="OMA" id="ACSGWAY"/>
<dbReference type="PhylomeDB" id="Q9LK43"/>
<dbReference type="PRO" id="PR:Q9LK43"/>
<dbReference type="Proteomes" id="UP000006548">
    <property type="component" value="Chromosome 3"/>
</dbReference>
<dbReference type="ExpressionAtlas" id="Q9LK43">
    <property type="expression patterns" value="baseline and differential"/>
</dbReference>
<dbReference type="GO" id="GO:0005794">
    <property type="term" value="C:Golgi apparatus"/>
    <property type="evidence" value="ECO:0007005"/>
    <property type="project" value="TAIR"/>
</dbReference>
<dbReference type="GO" id="GO:0005886">
    <property type="term" value="C:plasma membrane"/>
    <property type="evidence" value="ECO:0007005"/>
    <property type="project" value="TAIR"/>
</dbReference>
<dbReference type="GO" id="GO:0009506">
    <property type="term" value="C:plasmodesma"/>
    <property type="evidence" value="ECO:0007005"/>
    <property type="project" value="TAIR"/>
</dbReference>
<dbReference type="GO" id="GO:0005524">
    <property type="term" value="F:ATP binding"/>
    <property type="evidence" value="ECO:0007669"/>
    <property type="project" value="UniProtKB-KW"/>
</dbReference>
<dbReference type="GO" id="GO:0106310">
    <property type="term" value="F:protein serine kinase activity"/>
    <property type="evidence" value="ECO:0007669"/>
    <property type="project" value="RHEA"/>
</dbReference>
<dbReference type="GO" id="GO:0004674">
    <property type="term" value="F:protein serine/threonine kinase activity"/>
    <property type="evidence" value="ECO:0007669"/>
    <property type="project" value="UniProtKB-KW"/>
</dbReference>
<dbReference type="CDD" id="cd14066">
    <property type="entry name" value="STKc_IRAK"/>
    <property type="match status" value="1"/>
</dbReference>
<dbReference type="FunFam" id="3.80.10.10:FF:000129">
    <property type="entry name" value="Leucine-rich repeat receptor-like kinase"/>
    <property type="match status" value="1"/>
</dbReference>
<dbReference type="FunFam" id="1.10.510.10:FF:000198">
    <property type="entry name" value="receptor protein kinase TMK1"/>
    <property type="match status" value="1"/>
</dbReference>
<dbReference type="FunFam" id="3.30.200.20:FF:000226">
    <property type="entry name" value="receptor protein kinase TMK1"/>
    <property type="match status" value="1"/>
</dbReference>
<dbReference type="FunFam" id="3.80.10.10:FF:000190">
    <property type="entry name" value="Receptor-like kinase TMK4"/>
    <property type="match status" value="1"/>
</dbReference>
<dbReference type="Gene3D" id="3.30.200.20">
    <property type="entry name" value="Phosphorylase Kinase, domain 1"/>
    <property type="match status" value="1"/>
</dbReference>
<dbReference type="Gene3D" id="3.80.10.10">
    <property type="entry name" value="Ribonuclease Inhibitor"/>
    <property type="match status" value="2"/>
</dbReference>
<dbReference type="Gene3D" id="1.10.510.10">
    <property type="entry name" value="Transferase(Phosphotransferase) domain 1"/>
    <property type="match status" value="1"/>
</dbReference>
<dbReference type="InterPro" id="IPR052422">
    <property type="entry name" value="Auxin_Ser/Thr_Kinase"/>
</dbReference>
<dbReference type="InterPro" id="IPR011009">
    <property type="entry name" value="Kinase-like_dom_sf"/>
</dbReference>
<dbReference type="InterPro" id="IPR001611">
    <property type="entry name" value="Leu-rich_rpt"/>
</dbReference>
<dbReference type="InterPro" id="IPR003591">
    <property type="entry name" value="Leu-rich_rpt_typical-subtyp"/>
</dbReference>
<dbReference type="InterPro" id="IPR032675">
    <property type="entry name" value="LRR_dom_sf"/>
</dbReference>
<dbReference type="InterPro" id="IPR013210">
    <property type="entry name" value="LRR_N_plant-typ"/>
</dbReference>
<dbReference type="InterPro" id="IPR000719">
    <property type="entry name" value="Prot_kinase_dom"/>
</dbReference>
<dbReference type="InterPro" id="IPR017441">
    <property type="entry name" value="Protein_kinase_ATP_BS"/>
</dbReference>
<dbReference type="InterPro" id="IPR001245">
    <property type="entry name" value="Ser-Thr/Tyr_kinase_cat_dom"/>
</dbReference>
<dbReference type="InterPro" id="IPR008271">
    <property type="entry name" value="Ser/Thr_kinase_AS"/>
</dbReference>
<dbReference type="PANTHER" id="PTHR47986">
    <property type="entry name" value="OSJNBA0070M12.3 PROTEIN"/>
    <property type="match status" value="1"/>
</dbReference>
<dbReference type="PANTHER" id="PTHR47986:SF10">
    <property type="entry name" value="RECEPTOR-LIKE KINASE TMK4"/>
    <property type="match status" value="1"/>
</dbReference>
<dbReference type="Pfam" id="PF00560">
    <property type="entry name" value="LRR_1"/>
    <property type="match status" value="3"/>
</dbReference>
<dbReference type="Pfam" id="PF13855">
    <property type="entry name" value="LRR_8"/>
    <property type="match status" value="1"/>
</dbReference>
<dbReference type="Pfam" id="PF08263">
    <property type="entry name" value="LRRNT_2"/>
    <property type="match status" value="2"/>
</dbReference>
<dbReference type="Pfam" id="PF07714">
    <property type="entry name" value="PK_Tyr_Ser-Thr"/>
    <property type="match status" value="1"/>
</dbReference>
<dbReference type="SMART" id="SM00369">
    <property type="entry name" value="LRR_TYP"/>
    <property type="match status" value="5"/>
</dbReference>
<dbReference type="SMART" id="SM00220">
    <property type="entry name" value="S_TKc"/>
    <property type="match status" value="1"/>
</dbReference>
<dbReference type="SUPFAM" id="SSF52058">
    <property type="entry name" value="L domain-like"/>
    <property type="match status" value="1"/>
</dbReference>
<dbReference type="SUPFAM" id="SSF56112">
    <property type="entry name" value="Protein kinase-like (PK-like)"/>
    <property type="match status" value="1"/>
</dbReference>
<dbReference type="PROSITE" id="PS00107">
    <property type="entry name" value="PROTEIN_KINASE_ATP"/>
    <property type="match status" value="1"/>
</dbReference>
<dbReference type="PROSITE" id="PS50011">
    <property type="entry name" value="PROTEIN_KINASE_DOM"/>
    <property type="match status" value="1"/>
</dbReference>
<dbReference type="PROSITE" id="PS00108">
    <property type="entry name" value="PROTEIN_KINASE_ST"/>
    <property type="match status" value="1"/>
</dbReference>
<proteinExistence type="evidence at protein level"/>
<comment type="function">
    <text evidence="6 7">Involved in auxin signal transduction and cell expansion and proliferation regulation (PubMed:23613767). May be involved in brassinosteroid-mediated plant growth and development via auxin regulation (PubMed:23921992). May be involved in microspore and pollen development (PubMed:23921992).</text>
</comment>
<comment type="catalytic activity">
    <reaction evidence="11">
        <text>L-seryl-[protein] + ATP = O-phospho-L-seryl-[protein] + ADP + H(+)</text>
        <dbReference type="Rhea" id="RHEA:17989"/>
        <dbReference type="Rhea" id="RHEA-COMP:9863"/>
        <dbReference type="Rhea" id="RHEA-COMP:11604"/>
        <dbReference type="ChEBI" id="CHEBI:15378"/>
        <dbReference type="ChEBI" id="CHEBI:29999"/>
        <dbReference type="ChEBI" id="CHEBI:30616"/>
        <dbReference type="ChEBI" id="CHEBI:83421"/>
        <dbReference type="ChEBI" id="CHEBI:456216"/>
        <dbReference type="EC" id="2.7.11.1"/>
    </reaction>
</comment>
<comment type="catalytic activity">
    <reaction evidence="11">
        <text>L-threonyl-[protein] + ATP = O-phospho-L-threonyl-[protein] + ADP + H(+)</text>
        <dbReference type="Rhea" id="RHEA:46608"/>
        <dbReference type="Rhea" id="RHEA-COMP:11060"/>
        <dbReference type="Rhea" id="RHEA-COMP:11605"/>
        <dbReference type="ChEBI" id="CHEBI:15378"/>
        <dbReference type="ChEBI" id="CHEBI:30013"/>
        <dbReference type="ChEBI" id="CHEBI:30616"/>
        <dbReference type="ChEBI" id="CHEBI:61977"/>
        <dbReference type="ChEBI" id="CHEBI:456216"/>
        <dbReference type="EC" id="2.7.11.1"/>
    </reaction>
</comment>
<comment type="subunit">
    <text evidence="7">Interacts with BAK1 (via kinase domain), SERK4 and SERK5.</text>
</comment>
<comment type="interaction">
    <interactant intactId="EBI-20664575">
        <id>Q9LK43</id>
    </interactant>
    <interactant intactId="EBI-17123993">
        <id>Q9LT96</id>
        <label>At5g49770</label>
    </interactant>
    <organismsDiffer>false</organismsDiffer>
    <experiments>4</experiments>
</comment>
<comment type="subcellular location">
    <subcellularLocation>
        <location evidence="2">Membrane</location>
        <topology evidence="2">Single-pass membrane protein</topology>
    </subcellularLocation>
</comment>
<comment type="tissue specificity">
    <text evidence="6 7">Expressed in roots, leaves, stems, siliques and flowers (PubMed:23613767). Ubiquitous, with a high expression in mature pollen grains and in the pericycle and the xylem vasculature of the primary and lateral roots (PubMed:23921992).</text>
</comment>
<comment type="induction">
    <text evidence="7">Initially up-regulated by exogenous auxin or brassinosteroid but down-regulated after a prolonged treatment. Down-regulated by abscisic acid, gibberellic acid or cytokinin.</text>
</comment>
<comment type="domain">
    <text evidence="1">The leucine-rich repeat (LRR) domain is disrupted by a non-LRR region, resulting in the formation of two LRR solenoid structures shaped like the Arabic number '7'. This is strikingly different from the horseshoe structures of the canonical LRR proteins.</text>
</comment>
<comment type="disruption phenotype">
    <text evidence="6 8">No visible phenotype (PubMed:23613767). Tmk2 and tmk4 double mutants, tmk3 and tmk4 double mutants and tmk2, tmk3 and tmk4 triple mutants have no visible phenotypes (PubMed:23613767). Tmk1 and tmk4 double mutants, tmk1, tmk2 and tmk4 triple mutants and tmk1, tmk3 and tmk4 triple mutants have a severe reduction in organ size, a substantial delay in growth and development, and a decrease in fertility (PubMed:23613767). Tmk1, tmk2, tmk3 and tmk4 quadruple mutants are embryo lethal (PubMed:23613767, PubMed:24578577).</text>
</comment>
<comment type="similarity">
    <text evidence="11">Belongs to the protein kinase superfamily. Ser/Thr protein kinase family.</text>
</comment>
<gene>
    <name evidence="9" type="primary">TMK4</name>
    <name evidence="10" type="synonym">BARK1</name>
    <name evidence="12" type="ordered locus">At3g23750</name>
    <name evidence="13" type="ORF">MYM9.9</name>
</gene>
<accession>Q9LK43</accession>
<accession>C0LGN6</accession>
<reference key="1">
    <citation type="journal article" date="2010" name="BMC Genomics">
        <title>Genome-wide cloning and sequence analysis of leucine-rich repeat receptor-like protein kinase genes in Arabidopsis thaliana.</title>
        <authorList>
            <person name="Gou X."/>
            <person name="He K."/>
            <person name="Yang H."/>
            <person name="Yuan T."/>
            <person name="Lin H."/>
            <person name="Clouse S.D."/>
            <person name="Li J."/>
        </authorList>
    </citation>
    <scope>NUCLEOTIDE SEQUENCE [MRNA]</scope>
</reference>
<reference key="2">
    <citation type="journal article" date="2000" name="DNA Res.">
        <title>Structural analysis of Arabidopsis thaliana chromosome 3. II. Sequence features of the 4,251,695 bp regions covered by 90 P1, TAC and BAC clones.</title>
        <authorList>
            <person name="Kaneko T."/>
            <person name="Katoh T."/>
            <person name="Sato S."/>
            <person name="Nakamura Y."/>
            <person name="Asamizu E."/>
            <person name="Tabata S."/>
        </authorList>
    </citation>
    <scope>NUCLEOTIDE SEQUENCE [LARGE SCALE GENOMIC DNA]</scope>
    <source>
        <strain>cv. Columbia</strain>
    </source>
</reference>
<reference key="3">
    <citation type="journal article" date="2017" name="Plant J.">
        <title>Araport11: a complete reannotation of the Arabidopsis thaliana reference genome.</title>
        <authorList>
            <person name="Cheng C.Y."/>
            <person name="Krishnakumar V."/>
            <person name="Chan A.P."/>
            <person name="Thibaud-Nissen F."/>
            <person name="Schobel S."/>
            <person name="Town C.D."/>
        </authorList>
    </citation>
    <scope>GENOME REANNOTATION</scope>
    <source>
        <strain>cv. Columbia</strain>
    </source>
</reference>
<reference key="4">
    <citation type="journal article" date="2003" name="Curr. Opin. Plant Biol.">
        <title>Using mutant alleles to determine the structure and function of leucine-rich repeat receptor-like kinases.</title>
        <authorList>
            <person name="Dievart A."/>
            <person name="Clark S.E."/>
        </authorList>
    </citation>
    <scope>GENE FAMILY</scope>
</reference>
<reference key="5">
    <citation type="journal article" date="2013" name="PLoS ONE">
        <title>The TMK subfamily of receptor-like kinases in Arabidopsis display an essential role in growth and a reduced sensitivity to auxin.</title>
        <authorList>
            <person name="Dai N."/>
            <person name="Wang W."/>
            <person name="Patterson S.E."/>
            <person name="Bleecker A.B."/>
        </authorList>
    </citation>
    <scope>TISSUE SPECIFICITY</scope>
    <scope>DISRUPTION PHENOTYPE</scope>
    <scope>GENE FAMILY</scope>
    <scope>NOMENCLATURE</scope>
</reference>
<reference key="6">
    <citation type="journal article" date="2013" name="Plant Cell Physiol.">
        <title>Identification of Arabidopsis BAK1-associating receptor-like kinase 1 (BARK1) and characterization of its gene expression and brassinosteroid-regulated root phenotypes.</title>
        <authorList>
            <person name="Kim M.H."/>
            <person name="Kim Y."/>
            <person name="Kim J.W."/>
            <person name="Lee H.S."/>
            <person name="Lee W.S."/>
            <person name="Kim S.K."/>
            <person name="Wang Z.Y."/>
            <person name="Kim S.H."/>
        </authorList>
    </citation>
    <scope>FUNCTION</scope>
    <scope>INTERACTION WITH BAK1; SERK4 AND SERK5</scope>
    <scope>TISSUE SPECIFICITY</scope>
    <scope>INDUCTION BY HORMONES</scope>
    <scope>GENE FAMILY</scope>
    <scope>NOMENCLATURE</scope>
</reference>
<reference key="7">
    <citation type="journal article" date="2014" name="Science">
        <title>Cell surface ABP1-TMK auxin-sensing complex activates ROP GTPase signaling.</title>
        <authorList>
            <person name="Xu T."/>
            <person name="Dai N."/>
            <person name="Chen J."/>
            <person name="Nagawa S."/>
            <person name="Cao M."/>
            <person name="Li H."/>
            <person name="Zhou Z."/>
            <person name="Chen X."/>
            <person name="De Rycke R."/>
            <person name="Rakusova H."/>
            <person name="Wang W."/>
            <person name="Jones A.M."/>
            <person name="Friml J."/>
            <person name="Patterson S.E."/>
            <person name="Bleecker A.B."/>
            <person name="Yang Z."/>
        </authorList>
    </citation>
    <scope>DISRUPTION PHENOTYPE</scope>
</reference>
<evidence type="ECO:0000250" key="1">
    <source>
        <dbReference type="UniProtKB" id="P43298"/>
    </source>
</evidence>
<evidence type="ECO:0000255" key="2"/>
<evidence type="ECO:0000255" key="3">
    <source>
        <dbReference type="PROSITE-ProRule" id="PRU00159"/>
    </source>
</evidence>
<evidence type="ECO:0000255" key="4">
    <source>
        <dbReference type="PROSITE-ProRule" id="PRU00498"/>
    </source>
</evidence>
<evidence type="ECO:0000256" key="5">
    <source>
        <dbReference type="SAM" id="MobiDB-lite"/>
    </source>
</evidence>
<evidence type="ECO:0000269" key="6">
    <source>
    </source>
</evidence>
<evidence type="ECO:0000269" key="7">
    <source>
    </source>
</evidence>
<evidence type="ECO:0000269" key="8">
    <source>
    </source>
</evidence>
<evidence type="ECO:0000303" key="9">
    <source>
    </source>
</evidence>
<evidence type="ECO:0000303" key="10">
    <source>
    </source>
</evidence>
<evidence type="ECO:0000305" key="11"/>
<evidence type="ECO:0000312" key="12">
    <source>
        <dbReference type="Araport" id="AT3G23750"/>
    </source>
</evidence>
<evidence type="ECO:0000312" key="13">
    <source>
        <dbReference type="EMBL" id="BAB01851.1"/>
    </source>
</evidence>
<evidence type="ECO:0000312" key="14">
    <source>
        <dbReference type="Proteomes" id="UP000006548"/>
    </source>
</evidence>